<proteinExistence type="inferred from homology"/>
<protein>
    <recommendedName>
        <fullName evidence="1">Probable transaldolase</fullName>
        <ecNumber evidence="1">2.2.1.2</ecNumber>
    </recommendedName>
</protein>
<organism>
    <name type="scientific">Hyphomonas neptunium (strain ATCC 15444)</name>
    <dbReference type="NCBI Taxonomy" id="228405"/>
    <lineage>
        <taxon>Bacteria</taxon>
        <taxon>Pseudomonadati</taxon>
        <taxon>Pseudomonadota</taxon>
        <taxon>Alphaproteobacteria</taxon>
        <taxon>Hyphomonadales</taxon>
        <taxon>Hyphomonadaceae</taxon>
        <taxon>Hyphomonas</taxon>
    </lineage>
</organism>
<accession>Q0BX85</accession>
<keyword id="KW-0963">Cytoplasm</keyword>
<keyword id="KW-0570">Pentose shunt</keyword>
<keyword id="KW-1185">Reference proteome</keyword>
<keyword id="KW-0704">Schiff base</keyword>
<keyword id="KW-0808">Transferase</keyword>
<evidence type="ECO:0000255" key="1">
    <source>
        <dbReference type="HAMAP-Rule" id="MF_00494"/>
    </source>
</evidence>
<dbReference type="EC" id="2.2.1.2" evidence="1"/>
<dbReference type="EMBL" id="CP000158">
    <property type="protein sequence ID" value="ABI77315.1"/>
    <property type="molecule type" value="Genomic_DNA"/>
</dbReference>
<dbReference type="SMR" id="Q0BX85"/>
<dbReference type="STRING" id="228405.HNE_3235"/>
<dbReference type="KEGG" id="hne:HNE_3235"/>
<dbReference type="eggNOG" id="COG0176">
    <property type="taxonomic scope" value="Bacteria"/>
</dbReference>
<dbReference type="HOGENOM" id="CLU_079764_0_0_5"/>
<dbReference type="UniPathway" id="UPA00115">
    <property type="reaction ID" value="UER00414"/>
</dbReference>
<dbReference type="Proteomes" id="UP000001959">
    <property type="component" value="Chromosome"/>
</dbReference>
<dbReference type="GO" id="GO:0005737">
    <property type="term" value="C:cytoplasm"/>
    <property type="evidence" value="ECO:0007669"/>
    <property type="project" value="UniProtKB-SubCell"/>
</dbReference>
<dbReference type="GO" id="GO:0016832">
    <property type="term" value="F:aldehyde-lyase activity"/>
    <property type="evidence" value="ECO:0007669"/>
    <property type="project" value="InterPro"/>
</dbReference>
<dbReference type="GO" id="GO:0004801">
    <property type="term" value="F:transaldolase activity"/>
    <property type="evidence" value="ECO:0007669"/>
    <property type="project" value="UniProtKB-UniRule"/>
</dbReference>
<dbReference type="GO" id="GO:0005975">
    <property type="term" value="P:carbohydrate metabolic process"/>
    <property type="evidence" value="ECO:0007669"/>
    <property type="project" value="InterPro"/>
</dbReference>
<dbReference type="GO" id="GO:0006098">
    <property type="term" value="P:pentose-phosphate shunt"/>
    <property type="evidence" value="ECO:0007669"/>
    <property type="project" value="UniProtKB-UniRule"/>
</dbReference>
<dbReference type="CDD" id="cd00956">
    <property type="entry name" value="Transaldolase_FSA"/>
    <property type="match status" value="1"/>
</dbReference>
<dbReference type="FunFam" id="3.20.20.70:FF:000018">
    <property type="entry name" value="Probable transaldolase"/>
    <property type="match status" value="1"/>
</dbReference>
<dbReference type="Gene3D" id="3.20.20.70">
    <property type="entry name" value="Aldolase class I"/>
    <property type="match status" value="1"/>
</dbReference>
<dbReference type="HAMAP" id="MF_00494">
    <property type="entry name" value="Transaldolase_3b"/>
    <property type="match status" value="1"/>
</dbReference>
<dbReference type="InterPro" id="IPR013785">
    <property type="entry name" value="Aldolase_TIM"/>
</dbReference>
<dbReference type="InterPro" id="IPR001585">
    <property type="entry name" value="TAL/FSA"/>
</dbReference>
<dbReference type="InterPro" id="IPR022999">
    <property type="entry name" value="Transaldolase_3B"/>
</dbReference>
<dbReference type="InterPro" id="IPR004731">
    <property type="entry name" value="Transaldolase_3B/F6P_aldolase"/>
</dbReference>
<dbReference type="InterPro" id="IPR018225">
    <property type="entry name" value="Transaldolase_AS"/>
</dbReference>
<dbReference type="InterPro" id="IPR033919">
    <property type="entry name" value="TSA/FSA_arc/bac"/>
</dbReference>
<dbReference type="NCBIfam" id="TIGR00875">
    <property type="entry name" value="fsa_talC_mipB"/>
    <property type="match status" value="1"/>
</dbReference>
<dbReference type="PANTHER" id="PTHR10683:SF40">
    <property type="entry name" value="FRUCTOSE-6-PHOSPHATE ALDOLASE 1-RELATED"/>
    <property type="match status" value="1"/>
</dbReference>
<dbReference type="PANTHER" id="PTHR10683">
    <property type="entry name" value="TRANSALDOLASE"/>
    <property type="match status" value="1"/>
</dbReference>
<dbReference type="Pfam" id="PF00923">
    <property type="entry name" value="TAL_FSA"/>
    <property type="match status" value="1"/>
</dbReference>
<dbReference type="SUPFAM" id="SSF51569">
    <property type="entry name" value="Aldolase"/>
    <property type="match status" value="1"/>
</dbReference>
<dbReference type="PROSITE" id="PS01054">
    <property type="entry name" value="TRANSALDOLASE_1"/>
    <property type="match status" value="1"/>
</dbReference>
<dbReference type="PROSITE" id="PS00958">
    <property type="entry name" value="TRANSALDOLASE_2"/>
    <property type="match status" value="1"/>
</dbReference>
<feature type="chain" id="PRO_1000126322" description="Probable transaldolase">
    <location>
        <begin position="1"/>
        <end position="216"/>
    </location>
</feature>
<feature type="active site" description="Schiff-base intermediate with substrate" evidence="1">
    <location>
        <position position="83"/>
    </location>
</feature>
<gene>
    <name evidence="1" type="primary">tal</name>
    <name type="ordered locus">HNE_3235</name>
</gene>
<reference key="1">
    <citation type="journal article" date="2006" name="J. Bacteriol.">
        <title>Comparative genomic evidence for a close relationship between the dimorphic prosthecate bacteria Hyphomonas neptunium and Caulobacter crescentus.</title>
        <authorList>
            <person name="Badger J.H."/>
            <person name="Hoover T.R."/>
            <person name="Brun Y.V."/>
            <person name="Weiner R.M."/>
            <person name="Laub M.T."/>
            <person name="Alexandre G."/>
            <person name="Mrazek J."/>
            <person name="Ren Q."/>
            <person name="Paulsen I.T."/>
            <person name="Nelson K.E."/>
            <person name="Khouri H.M."/>
            <person name="Radune D."/>
            <person name="Sosa J."/>
            <person name="Dodson R.J."/>
            <person name="Sullivan S.A."/>
            <person name="Rosovitz M.J."/>
            <person name="Madupu R."/>
            <person name="Brinkac L.M."/>
            <person name="Durkin A.S."/>
            <person name="Daugherty S.C."/>
            <person name="Kothari S.P."/>
            <person name="Giglio M.G."/>
            <person name="Zhou L."/>
            <person name="Haft D.H."/>
            <person name="Selengut J.D."/>
            <person name="Davidsen T.M."/>
            <person name="Yang Q."/>
            <person name="Zafar N."/>
            <person name="Ward N.L."/>
        </authorList>
    </citation>
    <scope>NUCLEOTIDE SEQUENCE [LARGE SCALE GENOMIC DNA]</scope>
    <source>
        <strain>ATCC 15444</strain>
    </source>
</reference>
<sequence>MKFFVDTADTQDIADLAATGLIDGVTTNPSLIAKSGRPFAEVIAEICALTDGPVSAEVVAIDFDGMMREGRKLAKIADNVTVKLPLTLEGLKACKALTSDGIDVNVTLCFSANQALLAAKAGATFISPFIGRLDDIHIDGMELIQEIRQIYDNYMFETEILAASIRSPNHVRLCALAGADVMTAPPAVIRSLVSHPLTDKGLETFLADAKKAGIEV</sequence>
<name>TAL_HYPNA</name>
<comment type="function">
    <text evidence="1">Transaldolase is important for the balance of metabolites in the pentose-phosphate pathway.</text>
</comment>
<comment type="catalytic activity">
    <reaction evidence="1">
        <text>D-sedoheptulose 7-phosphate + D-glyceraldehyde 3-phosphate = D-erythrose 4-phosphate + beta-D-fructose 6-phosphate</text>
        <dbReference type="Rhea" id="RHEA:17053"/>
        <dbReference type="ChEBI" id="CHEBI:16897"/>
        <dbReference type="ChEBI" id="CHEBI:57483"/>
        <dbReference type="ChEBI" id="CHEBI:57634"/>
        <dbReference type="ChEBI" id="CHEBI:59776"/>
        <dbReference type="EC" id="2.2.1.2"/>
    </reaction>
</comment>
<comment type="pathway">
    <text evidence="1">Carbohydrate degradation; pentose phosphate pathway; D-glyceraldehyde 3-phosphate and beta-D-fructose 6-phosphate from D-ribose 5-phosphate and D-xylulose 5-phosphate (non-oxidative stage): step 2/3.</text>
</comment>
<comment type="subcellular location">
    <subcellularLocation>
        <location evidence="1">Cytoplasm</location>
    </subcellularLocation>
</comment>
<comment type="similarity">
    <text evidence="1">Belongs to the transaldolase family. Type 3B subfamily.</text>
</comment>